<evidence type="ECO:0000250" key="1">
    <source>
        <dbReference type="UniProtKB" id="A0A499UB99"/>
    </source>
</evidence>
<evidence type="ECO:0000250" key="2">
    <source>
        <dbReference type="UniProtKB" id="P80324"/>
    </source>
</evidence>
<evidence type="ECO:0000250" key="3">
    <source>
        <dbReference type="UniProtKB" id="Q9HGY3"/>
    </source>
</evidence>
<evidence type="ECO:0000255" key="4"/>
<evidence type="ECO:0000255" key="5">
    <source>
        <dbReference type="PROSITE-ProRule" id="PRU00498"/>
    </source>
</evidence>
<evidence type="ECO:0000269" key="6">
    <source>
    </source>
</evidence>
<evidence type="ECO:0000303" key="7">
    <source>
    </source>
</evidence>
<evidence type="ECO:0000305" key="8"/>
<evidence type="ECO:0000305" key="9">
    <source>
    </source>
</evidence>
<protein>
    <recommendedName>
        <fullName evidence="7">D-amino-acid oxidase</fullName>
        <shortName>DAAO</shortName>
        <shortName>DAMOX</shortName>
        <shortName>DAO</shortName>
        <ecNumber evidence="9">1.4.3.3</ecNumber>
    </recommendedName>
</protein>
<name>OXDA_FUSVN</name>
<reference key="1">
    <citation type="journal article" date="1990" name="J. Biochem.">
        <title>Structure and expression of cDNA for D-amino acid oxidase active against cephalosporin C from Fusarium solani.</title>
        <authorList>
            <person name="Isogai T."/>
            <person name="Ono H."/>
            <person name="Ishitani Y."/>
            <person name="Kojo H."/>
            <person name="Ueda Y."/>
            <person name="Kohsaka M."/>
        </authorList>
    </citation>
    <scope>NUCLEOTIDE SEQUENCE [MRNA]</scope>
    <scope>PARTIAL PROTEIN SEQUENCE</scope>
    <scope>FUNCTION</scope>
    <scope>CATALYTIC ACTIVITY</scope>
    <scope>BIOTECHNOLOGY</scope>
    <source>
        <strain>M-0718 / FERM P-2688</strain>
    </source>
</reference>
<organism>
    <name type="scientific">Fusarium vanettenii</name>
    <name type="common">Neocosmospora pisi</name>
    <dbReference type="NCBI Taxonomy" id="2747968"/>
    <lineage>
        <taxon>Eukaryota</taxon>
        <taxon>Fungi</taxon>
        <taxon>Dikarya</taxon>
        <taxon>Ascomycota</taxon>
        <taxon>Pezizomycotina</taxon>
        <taxon>Sordariomycetes</taxon>
        <taxon>Hypocreomycetidae</taxon>
        <taxon>Hypocreales</taxon>
        <taxon>Nectriaceae</taxon>
        <taxon>Fusarium</taxon>
        <taxon>Fusarium solani species complex</taxon>
    </lineage>
</organism>
<keyword id="KW-0903">Direct protein sequencing</keyword>
<keyword id="KW-0274">FAD</keyword>
<keyword id="KW-0285">Flavoprotein</keyword>
<keyword id="KW-0325">Glycoprotein</keyword>
<keyword id="KW-0560">Oxidoreductase</keyword>
<keyword id="KW-0576">Peroxisome</keyword>
<keyword id="KW-0732">Signal</keyword>
<accession>P24552</accession>
<proteinExistence type="evidence at protein level"/>
<comment type="function">
    <text evidence="3 6">Catalyzes the oxidative deamination of D-amino acids with broad substrate specificity (PubMed:1982443). Enables the organism to utilize D-amino acids as a source of nutrients (By similarity).</text>
</comment>
<comment type="catalytic activity">
    <reaction evidence="9">
        <text>a D-alpha-amino acid + O2 + H2O = a 2-oxocarboxylate + H2O2 + NH4(+)</text>
        <dbReference type="Rhea" id="RHEA:21816"/>
        <dbReference type="ChEBI" id="CHEBI:15377"/>
        <dbReference type="ChEBI" id="CHEBI:15379"/>
        <dbReference type="ChEBI" id="CHEBI:16240"/>
        <dbReference type="ChEBI" id="CHEBI:28938"/>
        <dbReference type="ChEBI" id="CHEBI:35179"/>
        <dbReference type="ChEBI" id="CHEBI:59871"/>
        <dbReference type="EC" id="1.4.3.3"/>
    </reaction>
</comment>
<comment type="cofactor">
    <cofactor>
        <name>FAD</name>
        <dbReference type="ChEBI" id="CHEBI:57692"/>
    </cofactor>
</comment>
<comment type="subcellular location">
    <subcellularLocation>
        <location evidence="2">Peroxisome matrix</location>
    </subcellularLocation>
</comment>
<comment type="PTM">
    <text>The N-terminus is blocked.</text>
</comment>
<comment type="biotechnology">
    <text evidence="6">Capable of converting cephalosporin C (CPC) into 7-beta-(5-carboxy-5-oxopentanamido)-cephalosporinic acid, an initial material of different beta-lactam antibiotics.</text>
</comment>
<comment type="similarity">
    <text evidence="8">Belongs to the DAMOX/DASOX family.</text>
</comment>
<dbReference type="EC" id="1.4.3.3" evidence="9"/>
<dbReference type="EMBL" id="D00809">
    <property type="protein sequence ID" value="BAA00692.1"/>
    <property type="molecule type" value="mRNA"/>
</dbReference>
<dbReference type="PIR" id="JX0152">
    <property type="entry name" value="JX0152"/>
</dbReference>
<dbReference type="SMR" id="P24552"/>
<dbReference type="VEuPathDB" id="FungiDB:NECHADRAFT_102418"/>
<dbReference type="GO" id="GO:0005782">
    <property type="term" value="C:peroxisomal matrix"/>
    <property type="evidence" value="ECO:0000250"/>
    <property type="project" value="UniProtKB"/>
</dbReference>
<dbReference type="GO" id="GO:0005777">
    <property type="term" value="C:peroxisome"/>
    <property type="evidence" value="ECO:0000250"/>
    <property type="project" value="UniProtKB"/>
</dbReference>
<dbReference type="GO" id="GO:0003884">
    <property type="term" value="F:D-amino-acid oxidase activity"/>
    <property type="evidence" value="ECO:0007669"/>
    <property type="project" value="UniProtKB-EC"/>
</dbReference>
<dbReference type="GO" id="GO:0071949">
    <property type="term" value="F:FAD binding"/>
    <property type="evidence" value="ECO:0007669"/>
    <property type="project" value="InterPro"/>
</dbReference>
<dbReference type="GO" id="GO:0019478">
    <property type="term" value="P:D-amino acid catabolic process"/>
    <property type="evidence" value="ECO:0007669"/>
    <property type="project" value="TreeGrafter"/>
</dbReference>
<dbReference type="GO" id="GO:0019740">
    <property type="term" value="P:nitrogen utilization"/>
    <property type="evidence" value="ECO:0000250"/>
    <property type="project" value="UniProtKB"/>
</dbReference>
<dbReference type="Gene3D" id="3.30.9.10">
    <property type="entry name" value="D-Amino Acid Oxidase, subunit A, domain 2"/>
    <property type="match status" value="1"/>
</dbReference>
<dbReference type="Gene3D" id="3.40.50.720">
    <property type="entry name" value="NAD(P)-binding Rossmann-like Domain"/>
    <property type="match status" value="1"/>
</dbReference>
<dbReference type="InterPro" id="IPR006181">
    <property type="entry name" value="D-amino_acid_oxidase_CS"/>
</dbReference>
<dbReference type="InterPro" id="IPR023209">
    <property type="entry name" value="DAO"/>
</dbReference>
<dbReference type="InterPro" id="IPR006076">
    <property type="entry name" value="FAD-dep_OxRdtase"/>
</dbReference>
<dbReference type="PANTHER" id="PTHR11530">
    <property type="entry name" value="D-AMINO ACID OXIDASE"/>
    <property type="match status" value="1"/>
</dbReference>
<dbReference type="PANTHER" id="PTHR11530:SF16">
    <property type="entry name" value="D-AMINO ACID OXIDASE (AFU_ORTHOLOGUE AFUA_5G11290)"/>
    <property type="match status" value="1"/>
</dbReference>
<dbReference type="Pfam" id="PF01266">
    <property type="entry name" value="DAO"/>
    <property type="match status" value="1"/>
</dbReference>
<dbReference type="PIRSF" id="PIRSF000189">
    <property type="entry name" value="D-aa_oxidase"/>
    <property type="match status" value="1"/>
</dbReference>
<dbReference type="SUPFAM" id="SSF54373">
    <property type="entry name" value="FAD-linked reductases, C-terminal domain"/>
    <property type="match status" value="1"/>
</dbReference>
<dbReference type="SUPFAM" id="SSF51971">
    <property type="entry name" value="Nucleotide-binding domain"/>
    <property type="match status" value="1"/>
</dbReference>
<dbReference type="PROSITE" id="PS00677">
    <property type="entry name" value="DAO"/>
    <property type="match status" value="1"/>
</dbReference>
<feature type="signal peptide" evidence="4">
    <location>
        <begin position="1"/>
        <end position="22"/>
    </location>
</feature>
<feature type="chain" id="PRO_0000162766" description="D-amino-acid oxidase">
    <location>
        <begin position="23"/>
        <end position="361"/>
    </location>
</feature>
<feature type="short sequence motif" description="Microbody targeting signal" evidence="4">
    <location>
        <begin position="359"/>
        <end position="361"/>
    </location>
</feature>
<feature type="binding site" evidence="1">
    <location>
        <position position="10"/>
    </location>
    <ligand>
        <name>FAD</name>
        <dbReference type="ChEBI" id="CHEBI:57692"/>
    </ligand>
</feature>
<feature type="binding site" evidence="2">
    <location>
        <position position="13"/>
    </location>
    <ligand>
        <name>FAD</name>
        <dbReference type="ChEBI" id="CHEBI:57692"/>
    </ligand>
</feature>
<feature type="binding site" evidence="2">
    <location>
        <position position="34"/>
    </location>
    <ligand>
        <name>FAD</name>
        <dbReference type="ChEBI" id="CHEBI:57692"/>
    </ligand>
</feature>
<feature type="binding site" evidence="1">
    <location>
        <position position="35"/>
    </location>
    <ligand>
        <name>FAD</name>
        <dbReference type="ChEBI" id="CHEBI:57692"/>
    </ligand>
</feature>
<feature type="binding site" evidence="2">
    <location>
        <position position="45"/>
    </location>
    <ligand>
        <name>FAD</name>
        <dbReference type="ChEBI" id="CHEBI:57692"/>
    </ligand>
</feature>
<feature type="binding site" evidence="2">
    <location>
        <position position="46"/>
    </location>
    <ligand>
        <name>FAD</name>
        <dbReference type="ChEBI" id="CHEBI:57692"/>
    </ligand>
</feature>
<feature type="binding site" evidence="2">
    <location>
        <position position="50"/>
    </location>
    <ligand>
        <name>FAD</name>
        <dbReference type="ChEBI" id="CHEBI:57692"/>
    </ligand>
</feature>
<feature type="binding site" evidence="2">
    <location>
        <position position="52"/>
    </location>
    <ligand>
        <name>FAD</name>
        <dbReference type="ChEBI" id="CHEBI:57692"/>
    </ligand>
</feature>
<feature type="binding site" evidence="2">
    <location>
        <position position="242"/>
    </location>
    <ligand>
        <name>(R)-lactate</name>
        <dbReference type="ChEBI" id="CHEBI:16004"/>
    </ligand>
</feature>
<feature type="binding site" evidence="2">
    <location>
        <position position="242"/>
    </location>
    <ligand>
        <name>anthranilate</name>
        <dbReference type="ChEBI" id="CHEBI:16567"/>
        <label>1</label>
    </ligand>
</feature>
<feature type="binding site" evidence="2">
    <location>
        <position position="258"/>
    </location>
    <ligand>
        <name>(R)-lactate</name>
        <dbReference type="ChEBI" id="CHEBI:16004"/>
    </ligand>
</feature>
<feature type="binding site" evidence="2">
    <location>
        <position position="258"/>
    </location>
    <ligand>
        <name>anthranilate</name>
        <dbReference type="ChEBI" id="CHEBI:16567"/>
        <label>2</label>
    </ligand>
</feature>
<feature type="binding site" evidence="2">
    <location>
        <position position="305"/>
    </location>
    <ligand>
        <name>(R)-lactate</name>
        <dbReference type="ChEBI" id="CHEBI:16004"/>
    </ligand>
</feature>
<feature type="binding site" evidence="2">
    <location>
        <position position="305"/>
    </location>
    <ligand>
        <name>anthranilate</name>
        <dbReference type="ChEBI" id="CHEBI:16567"/>
        <label>1</label>
    </ligand>
</feature>
<feature type="binding site" evidence="2">
    <location>
        <position position="305"/>
    </location>
    <ligand>
        <name>FAD</name>
        <dbReference type="ChEBI" id="CHEBI:57692"/>
    </ligand>
</feature>
<feature type="binding site" evidence="2">
    <location>
        <position position="332"/>
    </location>
    <ligand>
        <name>FAD</name>
        <dbReference type="ChEBI" id="CHEBI:57692"/>
    </ligand>
</feature>
<feature type="binding site" evidence="2">
    <location>
        <position position="335"/>
    </location>
    <ligand>
        <name>FAD</name>
        <dbReference type="ChEBI" id="CHEBI:57692"/>
    </ligand>
</feature>
<feature type="binding site" evidence="2">
    <location>
        <position position="336"/>
    </location>
    <ligand>
        <name>FAD</name>
        <dbReference type="ChEBI" id="CHEBI:57692"/>
    </ligand>
</feature>
<feature type="binding site" evidence="2">
    <location>
        <position position="337"/>
    </location>
    <ligand>
        <name>FAD</name>
        <dbReference type="ChEBI" id="CHEBI:57692"/>
    </ligand>
</feature>
<feature type="glycosylation site" description="N-linked (GlcNAc...) asparagine" evidence="5">
    <location>
        <position position="193"/>
    </location>
</feature>
<feature type="glycosylation site" description="N-linked (GlcNAc...) asparagine" evidence="5">
    <location>
        <position position="222"/>
    </location>
</feature>
<sequence length="361" mass="39696">MSNTIVVVGAGVIGLTSALLLSKNKGNKITVVAKHMPGDYDVEYASPFAGANHSPMATEESSEWERRTWYEFKRLVEEVPEAGVHFQKSRIQRRNVDTEKAQRSGFPDALFSKEPWFKNMFEDFREQHPSEVIPGYDSGCEFTSVCINTAIYLPWLLGQCIKNGVIVKRAILNDISEAKKLSHAGKTPNIIVNATGLGSYKLGGVEDKTMAPARGQIVVVRNESSPMLLTSGVEDGGADVMYLMQRAAGGGTILGGTYDVGNWESQPDPNIANRIMQRIVEVRPEIANGKGVKGLSVIRHAVGMRPWRKDGVRIEEEKLDDETWIVHNYGHSGWGYQGSYGCAENVVQLVDKVGKAAKSKL</sequence>